<comment type="function">
    <text evidence="3 7 11 13 23 24">Forms voltage-independent, pH-gated trimeric sodium channels that act as postsynaptic excitatory receptors in the nervous system, playing a crucial role in regulating synaptic plasticity, learning, and memory (PubMed:11448963, PubMed:9062189, PubMed:9360943). Upon extracellular pH drop this channel elicits transient, fast activating, and completely desensitizing inward currents (PubMed:12198124, PubMed:9062189, PubMed:9360943). Displays high selectivity for sodium ions but can also permit the permeation of other cations (PubMed:11448963, PubMed:9062189, PubMed:9360943). Regulates more or less directly intracellular calcium concentration and CaMKII phosphorylation, and thereby the density of dendritic spines (PubMed:15369669). Modulates neuronal activity in the circuits underlying innate fear (By similarity).</text>
</comment>
<comment type="function">
    <molecule>Isoform ASIC1a</molecule>
    <text evidence="23 24">Permeable to other cations including calcium, lithium and potassium.</text>
</comment>
<comment type="function">
    <molecule>Isoform ASIC1b</molecule>
    <text evidence="11 25">pH activation and steady-state inactivation are shifted to more acidic values (PubMed:12198124). Forms channels that are not permeable to calcium as it discrimates stronger between monovalent cations (PubMed:9707631).</text>
</comment>
<comment type="function">
    <molecule>Isoform ASIC-beta2</molecule>
    <text evidence="9">Has no pH-gated sodium channel activity per se but can associate with other ASICs and regulate their pH-sensitivity.</text>
</comment>
<comment type="catalytic activity">
    <reaction evidence="7 23">
        <text>Na(+)(in) = Na(+)(out)</text>
        <dbReference type="Rhea" id="RHEA:34963"/>
        <dbReference type="ChEBI" id="CHEBI:29101"/>
    </reaction>
</comment>
<comment type="catalytic activity">
    <reaction evidence="7 23">
        <text>Li(+)(in) = Li(+)(out)</text>
        <dbReference type="Rhea" id="RHEA:78551"/>
        <dbReference type="ChEBI" id="CHEBI:49713"/>
    </reaction>
</comment>
<comment type="catalytic activity">
    <reaction evidence="7 23">
        <text>K(+)(in) = K(+)(out)</text>
        <dbReference type="Rhea" id="RHEA:29463"/>
        <dbReference type="ChEBI" id="CHEBI:29103"/>
    </reaction>
</comment>
<comment type="catalytic activity">
    <molecule>Isoform ASIC1a</molecule>
    <reaction evidence="7 23">
        <text>Ca(2+)(in) = Ca(2+)(out)</text>
        <dbReference type="Rhea" id="RHEA:29671"/>
        <dbReference type="ChEBI" id="CHEBI:29108"/>
    </reaction>
</comment>
<comment type="catalytic activity">
    <molecule>Isoform ASIC1a</molecule>
    <reaction evidence="23">
        <text>H(+)(in) = H(+)(out)</text>
        <dbReference type="Rhea" id="RHEA:34979"/>
        <dbReference type="ChEBI" id="CHEBI:15378"/>
    </reaction>
</comment>
<comment type="activity regulation">
    <text evidence="5 6 8 11 13 15 16 17 18 19 20 21 22 23">Inhibited by the diuretic drug amiloride (PubMed:9062189). External calcium is required to potentiate proton activation of ASIC1 at physiological concentrations, but at higher, non-physiological concentrations, it inhibits activation (PubMed:12198124, PubMed:15369669, PubMed:9062189). Also potentiated by other multivalent cations like Mg(2+), Ba(2+) (PubMed:12198124). Activated by FMRFamide-related neuropeptides (PubMed:10798398). Inhibited by anti-inflammatory drugs like salicylic acid (PubMed:11588175). The spider venom psalmotoxin-1 specifically inhibits the ASIC1 homotrimer (PubMed:10829030, PubMed:26248594). The snake venom mambalgin-1, mambalgin-2 and mambalgin-3 inhibit the homotrimer of Asic1a (ASIC1 isoform 1) (PubMed:23034652, PubMed:23624383, PubMed:24323786, PubMed:24695733, PubMed:26680001). The snake venom mambalgin-1 and mambalgin-2 inhibit heterotrimers of Asic1a-Asic1b (ASIC1 isoform 1-ASIC1 isoform 3) (PubMed:23034652). Heterotrimer of Asic1a-Asic2a is inhibited by the snake venom mambalgin-1, mambalgin-2 and mambalgin-3 (PubMed:23034652, PubMed:23624383, PubMed:26680001). Heterotrimer of Asic1a-Asic2b is inhibited by the snake venom mambalgin-1 and mambalgin-2 (PubMed:23034652). The spider venom Pi-theraphotoxin-Hm3a inhibits the homotrimer of Asic1a (ASIC1 isoform 1) (PubMed:28327374). The spider venom Pi-theraphotoxin-Hm3a inhibits heterotrimers of Asic1a-Asic1b (ASIC1 isoform 1-ASIC1 isoform 3) (PubMed:28327374). The spider venom Pi-hexatoxin-Hi1a inhibits the ASIC1 homotrimer (PubMed:28320941).</text>
</comment>
<comment type="activity regulation">
    <molecule>Isoform ASIC1b</molecule>
    <text evidence="14 25">Not inhibited by extracellular calcium.</text>
</comment>
<comment type="subunit">
    <text evidence="1 3 24">Homotrimer (PubMed:9360943). Heterotrimer; with other ASIC proteins producing channel with different properties (PubMed:9360943). Interacts with PICK1; regulates ASIC1 clustering in membranes (By similarity). Interacts with STOM; alters heterotrimeric ASIC channels activity (By similarity).</text>
</comment>
<comment type="subcellular location">
    <subcellularLocation>
        <location evidence="10 23 25">Cell membrane</location>
        <topology evidence="1">Multi-pass membrane protein</topology>
    </subcellularLocation>
    <subcellularLocation>
        <location evidence="3">Postsynaptic cell membrane</location>
    </subcellularLocation>
    <subcellularLocation>
        <location evidence="3">Cell projection</location>
        <location evidence="3">Dendrite</location>
    </subcellularLocation>
    <text evidence="3">Isolated in synaptosomes from the dendritic synapses of neurons.</text>
</comment>
<comment type="alternative products">
    <event type="alternative splicing"/>
    <isoform>
        <id>P55926-1</id>
        <name evidence="26">ASIC1a</name>
        <name evidence="30">ASIC-alpha</name>
        <name>asic1alpha</name>
        <name evidence="28">BNaC2a</name>
        <sequence type="displayed"/>
    </isoform>
    <isoform>
        <id>P55926-2</id>
        <name evidence="27">ASIC-beta2</name>
        <sequence type="described" ref="VSP_015597 VSP_015598"/>
    </isoform>
    <isoform>
        <id>P55926-3</id>
        <name evidence="26">ASIC1b</name>
        <name evidence="30">ASIC-beta</name>
        <sequence type="described" ref="VSP_015597 VSP_015599"/>
    </isoform>
</comment>
<comment type="tissue specificity">
    <text evidence="10 24">Expressed in dorsal root ganglia and sciatic nerve (at protein level) (PubMed:11842212). Widely distributed throughout the brain. Expressed in olfactory bulb, neo and allocortical regions, dentate granule cells, pyramidal cells of CA1-CA3 subfields of the hippocampal formation, habenula, basolateral amygdaloid nuclei, and in the Purkinje and granule cells of the cerebellum. Diffusely detected over most other regions of the basal ganglia, including thalamic nuclei, substantia nigra, striatum and globus pallidus, hypothalamus, midbrain, pons, medulla and choroid plexus (PubMed:9360943).</text>
</comment>
<comment type="tissue specificity">
    <molecule>Isoform ASIC1b</molecule>
    <text evidence="25">Expressed only in dorsal root ganglion (DRG).</text>
</comment>
<comment type="tissue specificity">
    <molecule>Isoform ASIC-beta2</molecule>
    <text evidence="9">Expressed exclusively in trigeminal ganglion and dorsal root ganglion.</text>
</comment>
<comment type="induction">
    <text evidence="8">Up-regulated upon tissue inflammation.</text>
</comment>
<comment type="domain">
    <text evidence="2">The second transmembrane domain (TM2) is a discontinuous alpha-helix disrupted by the GAS motif, which forms the selectivity filter by adopting an extended, belt-like conformation aligned approximately parallel to the membrane plane. This peptide belt encircles the waist of the channel and divides TM2 into two discontinuous helical segments. The distal helical segment of TM2 interacts with the cytoplasmic portion of the first transmembrane domain (TM1) from a neighboring subunit, contributing to the structural and functional integrity of the channel.</text>
</comment>
<comment type="PTM">
    <text evidence="1">pH-gating could be regulated by serine proteases.</text>
</comment>
<comment type="PTM">
    <text evidence="1">Phosphorylation by PKA regulates interaction with PICK1 and subcellular localization. Phosphorylation by PKC may regulate the channel.</text>
</comment>
<comment type="similarity">
    <text evidence="31">Belongs to the amiloride-sensitive sodium channel (TC 1.A.6) family. ASIC1 subfamily.</text>
</comment>
<comment type="sequence caution" evidence="31">
    <conflict type="frameshift">
        <sequence resource="EMBL-CDS" id="CAA07080"/>
    </conflict>
</comment>
<comment type="sequence caution" evidence="31">
    <molecule>Isoform ASIC1b</molecule>
    <conflict type="frameshift">
        <sequence resource="EMBL-CDS" id="CAA07080"/>
    </conflict>
</comment>
<evidence type="ECO:0000250" key="1">
    <source>
        <dbReference type="UniProtKB" id="P78348"/>
    </source>
</evidence>
<evidence type="ECO:0000250" key="2">
    <source>
        <dbReference type="UniProtKB" id="Q1XA76"/>
    </source>
</evidence>
<evidence type="ECO:0000250" key="3">
    <source>
        <dbReference type="UniProtKB" id="Q6NXK8"/>
    </source>
</evidence>
<evidence type="ECO:0000255" key="4"/>
<evidence type="ECO:0000269" key="5">
    <source>
    </source>
</evidence>
<evidence type="ECO:0000269" key="6">
    <source>
    </source>
</evidence>
<evidence type="ECO:0000269" key="7">
    <source>
    </source>
</evidence>
<evidence type="ECO:0000269" key="8">
    <source>
    </source>
</evidence>
<evidence type="ECO:0000269" key="9">
    <source>
    </source>
</evidence>
<evidence type="ECO:0000269" key="10">
    <source>
    </source>
</evidence>
<evidence type="ECO:0000269" key="11">
    <source>
    </source>
</evidence>
<evidence type="ECO:0000269" key="12">
    <source>
    </source>
</evidence>
<evidence type="ECO:0000269" key="13">
    <source>
    </source>
</evidence>
<evidence type="ECO:0000269" key="14">
    <source>
    </source>
</evidence>
<evidence type="ECO:0000269" key="15">
    <source>
    </source>
</evidence>
<evidence type="ECO:0000269" key="16">
    <source>
    </source>
</evidence>
<evidence type="ECO:0000269" key="17">
    <source>
    </source>
</evidence>
<evidence type="ECO:0000269" key="18">
    <source>
    </source>
</evidence>
<evidence type="ECO:0000269" key="19">
    <source>
    </source>
</evidence>
<evidence type="ECO:0000269" key="20">
    <source>
    </source>
</evidence>
<evidence type="ECO:0000269" key="21">
    <source>
    </source>
</evidence>
<evidence type="ECO:0000269" key="22">
    <source>
    </source>
</evidence>
<evidence type="ECO:0000269" key="23">
    <source>
    </source>
</evidence>
<evidence type="ECO:0000269" key="24">
    <source>
    </source>
</evidence>
<evidence type="ECO:0000269" key="25">
    <source>
    </source>
</evidence>
<evidence type="ECO:0000303" key="26">
    <source>
    </source>
</evidence>
<evidence type="ECO:0000303" key="27">
    <source>
    </source>
</evidence>
<evidence type="ECO:0000303" key="28">
    <source>
    </source>
</evidence>
<evidence type="ECO:0000303" key="29">
    <source>
    </source>
</evidence>
<evidence type="ECO:0000303" key="30">
    <source>
    </source>
</evidence>
<evidence type="ECO:0000305" key="31"/>
<evidence type="ECO:0000305" key="32">
    <source>
    </source>
</evidence>
<evidence type="ECO:0000312" key="33">
    <source>
        <dbReference type="RGD" id="71062"/>
    </source>
</evidence>
<keyword id="KW-0025">Alternative splicing</keyword>
<keyword id="KW-0106">Calcium</keyword>
<keyword id="KW-0109">Calcium transport</keyword>
<keyword id="KW-1003">Cell membrane</keyword>
<keyword id="KW-0966">Cell projection</keyword>
<keyword id="KW-1015">Disulfide bond</keyword>
<keyword id="KW-0325">Glycoprotein</keyword>
<keyword id="KW-0407">Ion channel</keyword>
<keyword id="KW-0406">Ion transport</keyword>
<keyword id="KW-0472">Membrane</keyword>
<keyword id="KW-0597">Phosphoprotein</keyword>
<keyword id="KW-0628">Postsynaptic cell membrane</keyword>
<keyword id="KW-1185">Reference proteome</keyword>
<keyword id="KW-0915">Sodium</keyword>
<keyword id="KW-0894">Sodium channel</keyword>
<keyword id="KW-0739">Sodium transport</keyword>
<keyword id="KW-0770">Synapse</keyword>
<keyword id="KW-0812">Transmembrane</keyword>
<keyword id="KW-1133">Transmembrane helix</keyword>
<keyword id="KW-0813">Transport</keyword>
<accession>P55926</accession>
<accession>O88762</accession>
<accession>Q91YB8</accession>
<accession>Q99NA1</accession>
<dbReference type="EMBL" id="U94403">
    <property type="protein sequence ID" value="AAB53002.1"/>
    <property type="molecule type" value="mRNA"/>
</dbReference>
<dbReference type="EMBL" id="AJ006519">
    <property type="protein sequence ID" value="CAA07080.1"/>
    <property type="status" value="ALT_FRAME"/>
    <property type="molecule type" value="mRNA"/>
</dbReference>
<dbReference type="EMBL" id="AJ309926">
    <property type="protein sequence ID" value="CAC44267.1"/>
    <property type="molecule type" value="mRNA"/>
</dbReference>
<dbReference type="EMBL" id="AB049451">
    <property type="protein sequence ID" value="BAB39864.1"/>
    <property type="molecule type" value="mRNA"/>
</dbReference>
<dbReference type="RefSeq" id="NP_001401832.1">
    <molecule id="P55926-1"/>
    <property type="nucleotide sequence ID" value="NM_001414903.1"/>
</dbReference>
<dbReference type="RefSeq" id="NP_077068.1">
    <molecule id="P55926-1"/>
    <property type="nucleotide sequence ID" value="NM_024154.3"/>
</dbReference>
<dbReference type="RefSeq" id="XP_006257440.1">
    <molecule id="P55926-3"/>
    <property type="nucleotide sequence ID" value="XM_006257378.5"/>
</dbReference>
<dbReference type="SMR" id="P55926"/>
<dbReference type="FunCoup" id="P55926">
    <property type="interactions" value="1720"/>
</dbReference>
<dbReference type="MINT" id="P55926"/>
<dbReference type="STRING" id="10116.ENSRNOP00000068902"/>
<dbReference type="BindingDB" id="P55926"/>
<dbReference type="ChEMBL" id="CHEMBL3562170"/>
<dbReference type="DrugCentral" id="P55926"/>
<dbReference type="GuidetoPHARMACOLOGY" id="684"/>
<dbReference type="TCDB" id="1.A.6.1.2">
    <property type="family name" value="the epithelial na(+) channel (enac) family"/>
</dbReference>
<dbReference type="GlyCosmos" id="P55926">
    <property type="glycosylation" value="2 sites, No reported glycans"/>
</dbReference>
<dbReference type="GlyGen" id="P55926">
    <property type="glycosylation" value="2 sites"/>
</dbReference>
<dbReference type="iPTMnet" id="P55926"/>
<dbReference type="PhosphoSitePlus" id="P55926"/>
<dbReference type="SwissPalm" id="P55926"/>
<dbReference type="ABCD" id="P55926">
    <property type="antibodies" value="1 sequenced antibody"/>
</dbReference>
<dbReference type="Ensembl" id="ENSRNOT00000077175.2">
    <molecule id="P55926-3"/>
    <property type="protein sequence ID" value="ENSRNOP00000072206.2"/>
    <property type="gene ID" value="ENSRNOG00000059765.2"/>
</dbReference>
<dbReference type="GeneID" id="79123"/>
<dbReference type="KEGG" id="rno:79123"/>
<dbReference type="AGR" id="RGD:71062"/>
<dbReference type="CTD" id="41"/>
<dbReference type="RGD" id="71062">
    <property type="gene designation" value="Asic1"/>
</dbReference>
<dbReference type="VEuPathDB" id="HostDB:ENSRNOG00000059765"/>
<dbReference type="GeneTree" id="ENSGT00940000158414"/>
<dbReference type="HOGENOM" id="CLU_020415_1_2_1"/>
<dbReference type="InParanoid" id="P55926"/>
<dbReference type="OrthoDB" id="6021021at2759"/>
<dbReference type="PhylomeDB" id="P55926"/>
<dbReference type="TreeFam" id="TF330663"/>
<dbReference type="Reactome" id="R-RNO-2672351">
    <property type="pathway name" value="Stimuli-sensing channels"/>
</dbReference>
<dbReference type="PRO" id="PR:P55926"/>
<dbReference type="Proteomes" id="UP000002494">
    <property type="component" value="Chromosome 7"/>
</dbReference>
<dbReference type="Bgee" id="ENSRNOG00000059765">
    <property type="expression patterns" value="Expressed in cerebellum and 16 other cell types or tissues"/>
</dbReference>
<dbReference type="ExpressionAtlas" id="P55926">
    <property type="expression patterns" value="baseline and differential"/>
</dbReference>
<dbReference type="GO" id="GO:0009986">
    <property type="term" value="C:cell surface"/>
    <property type="evidence" value="ECO:0000314"/>
    <property type="project" value="RGD"/>
</dbReference>
<dbReference type="GO" id="GO:0030425">
    <property type="term" value="C:dendrite"/>
    <property type="evidence" value="ECO:0007669"/>
    <property type="project" value="UniProtKB-SubCell"/>
</dbReference>
<dbReference type="GO" id="GO:0098978">
    <property type="term" value="C:glutamatergic synapse"/>
    <property type="evidence" value="ECO:0000266"/>
    <property type="project" value="RGD"/>
</dbReference>
<dbReference type="GO" id="GO:0005794">
    <property type="term" value="C:Golgi apparatus"/>
    <property type="evidence" value="ECO:0007669"/>
    <property type="project" value="Ensembl"/>
</dbReference>
<dbReference type="GO" id="GO:0016020">
    <property type="term" value="C:membrane"/>
    <property type="evidence" value="ECO:0000314"/>
    <property type="project" value="MGI"/>
</dbReference>
<dbReference type="GO" id="GO:0005886">
    <property type="term" value="C:plasma membrane"/>
    <property type="evidence" value="ECO:0000250"/>
    <property type="project" value="UniProtKB"/>
</dbReference>
<dbReference type="GO" id="GO:0098839">
    <property type="term" value="C:postsynaptic density membrane"/>
    <property type="evidence" value="ECO:0000266"/>
    <property type="project" value="RGD"/>
</dbReference>
<dbReference type="GO" id="GO:0098793">
    <property type="term" value="C:presynapse"/>
    <property type="evidence" value="ECO:0007669"/>
    <property type="project" value="GOC"/>
</dbReference>
<dbReference type="GO" id="GO:0045202">
    <property type="term" value="C:synapse"/>
    <property type="evidence" value="ECO:0000266"/>
    <property type="project" value="RGD"/>
</dbReference>
<dbReference type="GO" id="GO:0022890">
    <property type="term" value="F:inorganic cation transmembrane transporter activity"/>
    <property type="evidence" value="ECO:0000314"/>
    <property type="project" value="MGI"/>
</dbReference>
<dbReference type="GO" id="GO:0015280">
    <property type="term" value="F:ligand-gated sodium channel activity"/>
    <property type="evidence" value="ECO:0000318"/>
    <property type="project" value="GO_Central"/>
</dbReference>
<dbReference type="GO" id="GO:0005261">
    <property type="term" value="F:monoatomic cation channel activity"/>
    <property type="evidence" value="ECO:0000266"/>
    <property type="project" value="RGD"/>
</dbReference>
<dbReference type="GO" id="GO:0005216">
    <property type="term" value="F:monoatomic ion channel activity"/>
    <property type="evidence" value="ECO:0000314"/>
    <property type="project" value="RGD"/>
</dbReference>
<dbReference type="GO" id="GO:0022839">
    <property type="term" value="F:monoatomic ion-gated channel activity"/>
    <property type="evidence" value="ECO:0000266"/>
    <property type="project" value="RGD"/>
</dbReference>
<dbReference type="GO" id="GO:0160128">
    <property type="term" value="F:pH-gated monoatomic ion channel activity"/>
    <property type="evidence" value="ECO:0000314"/>
    <property type="project" value="UniProtKB"/>
</dbReference>
<dbReference type="GO" id="GO:0008306">
    <property type="term" value="P:associative learning"/>
    <property type="evidence" value="ECO:0000266"/>
    <property type="project" value="RGD"/>
</dbReference>
<dbReference type="GO" id="GO:0001662">
    <property type="term" value="P:behavioral fear response"/>
    <property type="evidence" value="ECO:0000266"/>
    <property type="project" value="RGD"/>
</dbReference>
<dbReference type="GO" id="GO:0070588">
    <property type="term" value="P:calcium ion transmembrane transport"/>
    <property type="evidence" value="ECO:0000266"/>
    <property type="project" value="RGD"/>
</dbReference>
<dbReference type="GO" id="GO:0071467">
    <property type="term" value="P:cellular response to pH"/>
    <property type="evidence" value="ECO:0000250"/>
    <property type="project" value="UniProtKB"/>
</dbReference>
<dbReference type="GO" id="GO:0051649">
    <property type="term" value="P:establishment of localization in cell"/>
    <property type="evidence" value="ECO:0000266"/>
    <property type="project" value="RGD"/>
</dbReference>
<dbReference type="GO" id="GO:0098662">
    <property type="term" value="P:inorganic cation transmembrane transport"/>
    <property type="evidence" value="ECO:0000314"/>
    <property type="project" value="MGI"/>
</dbReference>
<dbReference type="GO" id="GO:0007613">
    <property type="term" value="P:memory"/>
    <property type="evidence" value="ECO:0000266"/>
    <property type="project" value="RGD"/>
</dbReference>
<dbReference type="GO" id="GO:0006812">
    <property type="term" value="P:monoatomic cation transport"/>
    <property type="evidence" value="ECO:0000266"/>
    <property type="project" value="RGD"/>
</dbReference>
<dbReference type="GO" id="GO:0034220">
    <property type="term" value="P:monoatomic ion transmembrane transport"/>
    <property type="evidence" value="ECO:0000315"/>
    <property type="project" value="RGD"/>
</dbReference>
<dbReference type="GO" id="GO:0046929">
    <property type="term" value="P:negative regulation of neurotransmitter secretion"/>
    <property type="evidence" value="ECO:0000266"/>
    <property type="project" value="RGD"/>
</dbReference>
<dbReference type="GO" id="GO:0007269">
    <property type="term" value="P:neurotransmitter secretion"/>
    <property type="evidence" value="ECO:0000266"/>
    <property type="project" value="RGD"/>
</dbReference>
<dbReference type="GO" id="GO:0042391">
    <property type="term" value="P:regulation of membrane potential"/>
    <property type="evidence" value="ECO:0000266"/>
    <property type="project" value="RGD"/>
</dbReference>
<dbReference type="GO" id="GO:0150052">
    <property type="term" value="P:regulation of postsynapse assembly"/>
    <property type="evidence" value="ECO:0000266"/>
    <property type="project" value="RGD"/>
</dbReference>
<dbReference type="GO" id="GO:0010447">
    <property type="term" value="P:response to acidic pH"/>
    <property type="evidence" value="ECO:0000266"/>
    <property type="project" value="RGD"/>
</dbReference>
<dbReference type="GO" id="GO:0001975">
    <property type="term" value="P:response to amphetamine"/>
    <property type="evidence" value="ECO:0000266"/>
    <property type="project" value="RGD"/>
</dbReference>
<dbReference type="GO" id="GO:0050915">
    <property type="term" value="P:sensory perception of sour taste"/>
    <property type="evidence" value="ECO:0000266"/>
    <property type="project" value="RGD"/>
</dbReference>
<dbReference type="GO" id="GO:0035725">
    <property type="term" value="P:sodium ion transmembrane transport"/>
    <property type="evidence" value="ECO:0000250"/>
    <property type="project" value="UniProtKB"/>
</dbReference>
<dbReference type="FunFam" id="2.60.470.10:FF:000001">
    <property type="entry name" value="Acid-sensing (proton-gated) ion channel family member 4a"/>
    <property type="match status" value="1"/>
</dbReference>
<dbReference type="FunFam" id="1.10.287.820:FF:000001">
    <property type="entry name" value="acid-sensing ion channel 1 isoform X2"/>
    <property type="match status" value="1"/>
</dbReference>
<dbReference type="FunFam" id="1.10.3590.10:FF:000001">
    <property type="entry name" value="acid-sensing ion channel 1 isoform X2"/>
    <property type="match status" value="1"/>
</dbReference>
<dbReference type="FunFam" id="1.10.3590.10:FF:000002">
    <property type="entry name" value="acid-sensing ion channel 1 isoform X2"/>
    <property type="match status" value="1"/>
</dbReference>
<dbReference type="FunFam" id="1.10.287.770:FF:000001">
    <property type="entry name" value="Acid-sensing ion channel subunit 1"/>
    <property type="match status" value="1"/>
</dbReference>
<dbReference type="Gene3D" id="1.10.3590.10">
    <property type="entry name" value="acid-sensing ion channel 1 domain"/>
    <property type="match status" value="2"/>
</dbReference>
<dbReference type="Gene3D" id="1.10.287.820">
    <property type="entry name" value="Acid-sensing ion channel domain"/>
    <property type="match status" value="1"/>
</dbReference>
<dbReference type="Gene3D" id="1.10.287.770">
    <property type="entry name" value="YojJ-like"/>
    <property type="match status" value="2"/>
</dbReference>
<dbReference type="InterPro" id="IPR001873">
    <property type="entry name" value="ENaC"/>
</dbReference>
<dbReference type="InterPro" id="IPR004724">
    <property type="entry name" value="ENaC_chordates"/>
</dbReference>
<dbReference type="InterPro" id="IPR020903">
    <property type="entry name" value="ENaC_CS"/>
</dbReference>
<dbReference type="NCBIfam" id="TIGR00859">
    <property type="entry name" value="ENaC"/>
    <property type="match status" value="1"/>
</dbReference>
<dbReference type="PANTHER" id="PTHR11690:SF170">
    <property type="entry name" value="ACID-SENSING ION CHANNEL 1"/>
    <property type="match status" value="1"/>
</dbReference>
<dbReference type="PANTHER" id="PTHR11690">
    <property type="entry name" value="AMILORIDE-SENSITIVE SODIUM CHANNEL-RELATED"/>
    <property type="match status" value="1"/>
</dbReference>
<dbReference type="Pfam" id="PF00858">
    <property type="entry name" value="ASC"/>
    <property type="match status" value="1"/>
</dbReference>
<dbReference type="PRINTS" id="PR01078">
    <property type="entry name" value="AMINACHANNEL"/>
</dbReference>
<dbReference type="PROSITE" id="PS01206">
    <property type="entry name" value="ASC"/>
    <property type="match status" value="1"/>
</dbReference>
<feature type="chain" id="PRO_0000181300" description="Acid-sensing ion channel 1">
    <location>
        <begin position="1"/>
        <end position="526"/>
    </location>
</feature>
<feature type="topological domain" description="Cytoplasmic" evidence="1">
    <location>
        <begin position="1"/>
        <end position="49"/>
    </location>
</feature>
<feature type="transmembrane region" description="Helical" evidence="1">
    <location>
        <begin position="50"/>
        <end position="66"/>
    </location>
</feature>
<feature type="topological domain" description="Extracellular" evidence="1">
    <location>
        <begin position="67"/>
        <end position="425"/>
    </location>
</feature>
<feature type="transmembrane region" description="Discontinuously helical" evidence="1">
    <location>
        <begin position="426"/>
        <end position="456"/>
    </location>
</feature>
<feature type="topological domain" description="Cytoplasmic" evidence="1">
    <location>
        <begin position="457"/>
        <end position="526"/>
    </location>
</feature>
<feature type="short sequence motif" description="GAS motif; ion selectivity filter" evidence="2">
    <location>
        <begin position="442"/>
        <end position="444"/>
    </location>
</feature>
<feature type="site" description="Involved in channel desensitization; the process by which the channel becomes unresponsive to proton stimulation" evidence="2">
    <location>
        <position position="79"/>
    </location>
</feature>
<feature type="site" description="Important residue for the inhibition by the spider venom Pi-theraphotoxin-Hm3a, which can explain functional difference between ASIC1a and ASIC1b" evidence="22">
    <location>
        <position position="175"/>
    </location>
</feature>
<feature type="site" description="Important residue for the inhibition by the spider venom Pi-theraphotoxin-Hm3a, which can explain functional difference between ASIC1a and ASIC1b" evidence="22">
    <location>
        <position position="177"/>
    </location>
</feature>
<feature type="site" description="Important for inhibition by the snake venom mambalgin-2" evidence="18">
    <location>
        <position position="349"/>
    </location>
</feature>
<feature type="site" description="Important for inhibition by the snake venom mambalgin-1 and mambalgin-2 toxins. Important for inhibition by the spider venom Pi-hexatoxin-Hi1a and psalmotoxin-1" evidence="17 18 19 20 21">
    <location>
        <position position="350"/>
    </location>
</feature>
<feature type="site" description="Involved in proton-dependent gating" evidence="1">
    <location>
        <position position="355"/>
    </location>
</feature>
<feature type="modified residue" description="Phosphoserine" evidence="1">
    <location>
        <position position="477"/>
    </location>
</feature>
<feature type="modified residue" description="Phosphoserine" evidence="3">
    <location>
        <position position="497"/>
    </location>
</feature>
<feature type="glycosylation site" description="N-linked (GlcNAc...) asparagine" evidence="4">
    <location>
        <position position="366"/>
    </location>
</feature>
<feature type="glycosylation site" description="N-linked (GlcNAc...) asparagine" evidence="4">
    <location>
        <position position="393"/>
    </location>
</feature>
<feature type="disulfide bond" evidence="2">
    <location>
        <begin position="93"/>
        <end position="194"/>
    </location>
</feature>
<feature type="disulfide bond" evidence="2">
    <location>
        <begin position="172"/>
        <end position="179"/>
    </location>
</feature>
<feature type="disulfide bond" evidence="2">
    <location>
        <begin position="290"/>
        <end position="365"/>
    </location>
</feature>
<feature type="disulfide bond" evidence="2">
    <location>
        <begin position="308"/>
        <end position="361"/>
    </location>
</feature>
<feature type="disulfide bond" evidence="2">
    <location>
        <begin position="312"/>
        <end position="359"/>
    </location>
</feature>
<feature type="disulfide bond" evidence="2">
    <location>
        <begin position="321"/>
        <end position="343"/>
    </location>
</feature>
<feature type="disulfide bond" evidence="2">
    <location>
        <begin position="323"/>
        <end position="335"/>
    </location>
</feature>
<feature type="splice variant" id="VSP_015597" description="In isoform ASIC-beta2 and isoform ASIC1b." evidence="26 27 30">
    <location>
        <begin position="1"/>
        <end position="185"/>
    </location>
</feature>
<feature type="splice variant" id="VSP_015598" description="In isoform ASIC-beta2." evidence="27">
    <original>V</original>
    <variation>MADIWGPHHHRQQQDSSESEEEEEKEMEAGSELDEGDDSPRDLVAFANSCTLHGASHVFVEGGPGPRQALWAVAFVIALGAFLCQ</variation>
    <location>
        <position position="186"/>
    </location>
</feature>
<feature type="splice variant" id="VSP_015599" description="In isoform ASIC1b." evidence="26 30">
    <original>V</original>
    <variation>MPIQIFCSVSFSSGEEAPGSMADIWGPHHHRQQQDSSESEEEEEKEMEAGSELDEGDDSPRDLVAFANSCTLHGASHVFVEGGPGPRQALWAVAFVIALGAFLCQVGDRVAYYLSYPHVTLLDEVATTELVFPAVTFCNTNAVRLSQLSYPDLLYLAPMLGLDESDDPGVPLAPPGPEAFSGEPFNLHRFYNRSCHRLEDMLLYCSYCGGPCGPHNFSV</variation>
    <location>
        <position position="186"/>
    </location>
</feature>
<feature type="mutagenesis site" description="No effect on pH-gated monoatomic ion channel activity. Increases desensitization rates; when associated with L-84 and M-85." evidence="12">
    <original>S</original>
    <variation>P</variation>
    <location>
        <position position="83"/>
    </location>
</feature>
<feature type="mutagenesis site" description="No effect on pH-gated monoatomic ion channel activity. Increases desensitization rates; when associated with P-83 and M-85." evidence="12">
    <original>Q</original>
    <variation>L</variation>
    <location>
        <position position="84"/>
    </location>
</feature>
<feature type="mutagenesis site" description="No effect on pH-gated monoatomic ion channel activity. Increases desensitization rates; when associated with P-83 and L-84." evidence="12">
    <original>L</original>
    <variation>M</variation>
    <location>
        <position position="85"/>
    </location>
</feature>
<feature type="mutagenesis site" description="No effect on channel activation and inactivation." evidence="11">
    <original>F</original>
    <variation>L</variation>
    <location>
        <position position="100"/>
    </location>
</feature>
<feature type="mutagenesis site" description="No effect on channel activation and inactivation." evidence="11">
    <original>V</original>
    <variation>L</variation>
    <location>
        <position position="103"/>
    </location>
</feature>
<feature type="mutagenesis site" description="Activated and inactivated at lower pH." evidence="11">
    <original>K</original>
    <variation>Y</variation>
    <location>
        <position position="105"/>
    </location>
</feature>
<feature type="mutagenesis site" description="Activated and inactivated at lower pH." evidence="11">
    <original>N</original>
    <variation>P</variation>
    <location>
        <position position="106"/>
    </location>
</feature>
<feature type="mutagenesis site" description="No effect on desensitization rates." evidence="12">
    <original>QMAD</original>
    <variation>HLVE</variation>
    <location>
        <begin position="128"/>
        <end position="131"/>
    </location>
</feature>
<feature type="mutagenesis site" description="No significant decrease in inhibition by the spider pi-theraphotoxin-Hm3a." evidence="22">
    <original>H</original>
    <variation>S</variation>
    <location>
        <position position="173"/>
    </location>
</feature>
<feature type="mutagenesis site" description="No significant decrease in inhibition by the spider pi-theraphotoxin-Hm3a." evidence="22">
    <original>F</original>
    <variation>Y</variation>
    <location>
        <position position="174"/>
    </location>
</feature>
<feature type="mutagenesis site" description="18-fold decrease in inhibition by the spider pi-theraphotoxin-Hm3a." evidence="22">
    <original>R</original>
    <variation>C</variation>
    <location>
        <position position="175"/>
    </location>
</feature>
<feature type="mutagenesis site" description="10-fold decrease in inhibition by the spider pi-theraphotoxin-Hm3a." evidence="22">
    <original>E</original>
    <variation>G</variation>
    <location>
        <position position="177"/>
    </location>
</feature>
<feature type="mutagenesis site" description="No significant decrease in inhibition by the spider pi-theraphotoxin-Hm3a." evidence="22">
    <original>A</original>
    <variation>P</variation>
    <location>
        <position position="178"/>
    </location>
</feature>
<feature type="mutagenesis site" description="No significant decrease in inhibition by the spider pi-theraphotoxin-Hm3a." evidence="22">
    <original>A</original>
    <variation>V</variation>
    <location>
        <position position="178"/>
    </location>
</feature>
<feature type="mutagenesis site" description="Small decrease in inhibition by the snake mambalgin-2 toxin; when associated with Q-259 and E-260." evidence="18">
    <original>R</original>
    <variation>K</variation>
    <location>
        <position position="190"/>
    </location>
</feature>
<feature type="mutagenesis site" description="No change in the shift of pH for both activation and desensitization by the spider venom psalmotoxin-1." evidence="19">
    <original>E</original>
    <variation>A</variation>
    <location>
        <position position="235"/>
    </location>
</feature>
<feature type="mutagenesis site" description="Small decrease in inhibition by the snake mambalgin-2 toxin; when associated with K-190 and E-260." evidence="18">
    <original>D</original>
    <variation>Q</variation>
    <location>
        <position position="259"/>
    </location>
</feature>
<feature type="mutagenesis site" description="Small decrease in inhibition by the snake mambalgin-2 toxin; when associated with K-190 and Q-259." evidence="18">
    <original>Q</original>
    <variation>E</variation>
    <location>
        <position position="260"/>
    </location>
</feature>
<feature type="mutagenesis site" description="No change in the shift of pH for both activation and desensitization by the spider venom psalmotoxin-1." evidence="19">
    <original>Y</original>
    <variation>A</variation>
    <location>
        <position position="316"/>
    </location>
</feature>
<feature type="mutagenesis site" description="Complete loss in inhibition by 200 nM of the snake mambalgin-2 toxin." evidence="18">
    <original>DF</original>
    <variation>GL</variation>
    <location>
        <begin position="349"/>
        <end position="350"/>
    </location>
</feature>
<feature type="mutagenesis site" description="High decrease in inhibition by the snake mambalgin-2 toxin." evidence="18">
    <original>D</original>
    <variation>G</variation>
    <location>
        <position position="349"/>
    </location>
</feature>
<feature type="mutagenesis site" description="Complete loss of inhibition by the spider Pi-hexatoxin-Hi1a, and by the snake mambalgin-2 toxin. Potentiated by the spider pi-theraphotoxin-Hm3a (at both pH 7.35 and 7.45) and inhibited at higher toxin concentration at pH 7.35. Complete loss in the shift of pH for both activation and desensitization by the spider venom psalmotoxin-1." evidence="17 19 21 22">
    <original>F</original>
    <variation>A</variation>
    <location>
        <position position="350"/>
    </location>
</feature>
<feature type="mutagenesis site" description="37-fold decrease in inhibition by the snake mambalgin-1 toxin. Very high decrease in inhibition by the snake mambalgin-2 toxin." evidence="18 20">
    <original>F</original>
    <variation>L</variation>
    <location>
        <position position="350"/>
    </location>
</feature>
<feature type="mutagenesis site" description="Moderate decrease in inhibition by the snake mambalgin-2 toxin." evidence="18">
    <original>V</original>
    <variation>A</variation>
    <location>
        <position position="352"/>
    </location>
</feature>
<feature type="mutagenesis site" description="No change in the shift of pH for both activation and desensitization by the spider venom psalmotoxin-1." evidence="19">
    <original>K</original>
    <variation>A</variation>
    <location>
        <position position="354"/>
    </location>
</feature>
<feature type="mutagenesis site" description="Moderate decrease in inhibition by the snake mambalgin-2 toxin." evidence="18">
    <original>Q</original>
    <variation>S</variation>
    <location>
        <position position="356"/>
    </location>
</feature>
<feature type="mutagenesis site" description="Moderate decrease in inhibition by the snake mambalgin-2 toxin." evidence="18">
    <original>E</original>
    <variation>N</variation>
    <location>
        <position position="357"/>
    </location>
</feature>
<feature type="mutagenesis site" description="Reduction of Ca(2+) block. Loss of Ca(2+) block; when associated with C-432." evidence="14">
    <original>E</original>
    <variation>G</variation>
    <location>
        <position position="425"/>
    </location>
</feature>
<feature type="mutagenesis site" description="Constitutive channel activity." evidence="24">
    <original>G</original>
    <variation>V</variation>
    <variation>F</variation>
    <location>
        <position position="431"/>
    </location>
</feature>
<feature type="mutagenesis site" description="Reduction of Ca(2+) block." evidence="14">
    <original>D</original>
    <variation>A</variation>
    <location>
        <position position="432"/>
    </location>
</feature>
<feature type="mutagenesis site" description="Reduction of Ca(2+) block. Loss of Ca(2+) block; when associated with G-425." evidence="14">
    <original>D</original>
    <variation>C</variation>
    <location>
        <position position="432"/>
    </location>
</feature>
<feature type="mutagenesis site" description="No effect on Ca(2+) block." evidence="14">
    <original>Q</original>
    <variation>N</variation>
    <location>
        <position position="436"/>
    </location>
</feature>
<feature type="sequence conflict" description="In Ref. 2; CAA07080." evidence="31" ref="2">
    <original>T</original>
    <variation>S</variation>
    <location sequence="P55926-3">
        <position position="128"/>
    </location>
</feature>
<sequence>MELKTEEEEVGGVQPVSIQAFASSSTLHGLAHIFSYERLSLKRALWALCFLGSLAVLLCVCTERVQYYFCYHHVTKLDEVAASQLTFPAVTLCNLNEFRFSQVSKNDLYHAGELLALLNNRYEIPDTQMADEKQLEILQDKANFRSFKPKPFNMREFYDRAGHDIRDMLLSCHFRGEACSAEDFKVVFTRYGKCYTFNSGQDGRPRLKTMKGGTGNGLEIMLDIQQDEYLPVWGETDETSFEAGIKVQIHSQDEPPFIDQLGFGVAPGFQTFVSCQEQRLIYLPSPWGTCNAVTMDSDFFDSYSITACRIDCETRYLVENCNCRMVHMPGDAPYCTPEQYKECADPALDFLVEKDQEYCVCEMPCNLTRYGKELSMVKIPSKASAKYLAKKFNKSEQYIGENILVLDIFFEVLNYETIEQKKAYEIAGLLGDIGGQMGLFIGASILTVLELFDYAYEVIKHRLCRRGKCQKEAKRSSADKGVALSLDDVKRHNPCESLRGHPAGMTYAANILPHHPARGTFEDFTC</sequence>
<name>ASIC1_RAT</name>
<proteinExistence type="evidence at protein level"/>
<gene>
    <name evidence="33" type="primary">Asic1</name>
    <name evidence="33" type="synonym">Accn2</name>
    <name evidence="33" type="synonym">Bnac2</name>
</gene>
<protein>
    <recommendedName>
        <fullName evidence="32">Acid-sensing ion channel 1</fullName>
        <shortName evidence="32">ASIC1</shortName>
    </recommendedName>
    <alternativeName>
        <fullName evidence="29">Acid-sensing ionic channel</fullName>
        <shortName evidence="29">ASIC</shortName>
    </alternativeName>
    <alternativeName>
        <fullName>Amiloride-sensitive cation channel 2, neuronal</fullName>
    </alternativeName>
    <alternativeName>
        <fullName evidence="33">Brain sodium channel 2</fullName>
    </alternativeName>
</protein>
<reference key="1">
    <citation type="journal article" date="1997" name="Nature">
        <title>A proton-gated cation channel involved in acid-sensing.</title>
        <authorList>
            <person name="Waldmann R."/>
            <person name="Champigny G."/>
            <person name="Bassilana F."/>
            <person name="Heurteaux C."/>
            <person name="Lazdunski M."/>
        </authorList>
    </citation>
    <scope>NUCLEOTIDE SEQUENCE [MRNA] (ISOFORM ASIC1A)</scope>
    <scope>FUNCTION (ISOFORM ASIC1A)</scope>
    <scope>TRANSPORTER ACTIVITY (ISOFORM ASIC1A)</scope>
    <scope>ACTIVITY REGULATION (ISOFORM ASIC1A)</scope>
    <scope>SUBCELLULAR LOCATION</scope>
</reference>
<reference key="2">
    <citation type="journal article" date="1998" name="Proc. Natl. Acad. Sci. U.S.A.">
        <title>A sensory neuron-specific, proton-gated ion channel.</title>
        <authorList>
            <person name="Chen C.-C."/>
            <person name="England S."/>
            <person name="Akopian A.N."/>
            <person name="Wood J.N."/>
        </authorList>
    </citation>
    <scope>NUCLEOTIDE SEQUENCE [MRNA] (ISOFORM ASIC1B)</scope>
    <scope>FUNCTION (ISOFORM ASIC1B)</scope>
    <scope>ACTIVITY REGULATION</scope>
    <scope>SUBCELLULAR LOCATION</scope>
    <scope>TISSUE SPECIFICITY (ISOFORM ASIC1B)</scope>
    <source>
        <tissue>Spinal ganglion</tissue>
    </source>
</reference>
<reference key="3">
    <citation type="journal article" date="2001" name="J. Biol. Chem.">
        <title>Molecular and functional characterization of acid-sensing ion channel (ASIC) 1b.</title>
        <authorList>
            <person name="Baessler E.-L."/>
            <person name="Ngo-Anh T.J."/>
            <person name="Geisler H.-S."/>
            <person name="Ruppersberg J.P."/>
            <person name="Gruender S."/>
        </authorList>
    </citation>
    <scope>NUCLEOTIDE SEQUENCE [MRNA] (ISOFORM ASIC1B)</scope>
    <scope>FUNCTION</scope>
    <scope>TRANSPORTER ACTIVITY (ISOFORM ASIC1A)</scope>
    <source>
        <tissue>Inner ear</tissue>
    </source>
</reference>
<reference key="4">
    <citation type="journal article" date="2001" name="NeuroReport">
        <title>Cloning and functional expression of ASIC-beta2, a splice variant of ASIC-beta.</title>
        <authorList>
            <person name="Ugawa S."/>
            <person name="Ueda T."/>
            <person name="Takahashi E."/>
            <person name="Hirabayashi Y."/>
            <person name="Yoneda T."/>
            <person name="Komai S."/>
            <person name="Shimada S."/>
        </authorList>
    </citation>
    <scope>NUCLEOTIDE SEQUENCE [MRNA] (ISOFORM ASIC-BETA2)</scope>
    <scope>FUNCTION (ISOFORM ASIC-BETA2)</scope>
    <scope>TISSUE SPECIFICITY (ISOFORM ASIC-BETA2)</scope>
    <source>
        <tissue>Trigeminal ganglion</tissue>
    </source>
</reference>
<reference key="5">
    <citation type="journal article" date="1997" name="J. Biol. Chem.">
        <title>The acid-sensitive ionic channel subunit ASIC and the mammalian degenerin MDEG form a heteromultimeric H+-gated Na+ channel with novel properties.</title>
        <authorList>
            <person name="Bassilana F."/>
            <person name="Champigny G."/>
            <person name="Waldmann R."/>
            <person name="de Weille J.R."/>
            <person name="Heurteaux C."/>
            <person name="Lazdunski M."/>
        </authorList>
    </citation>
    <scope>FUNCTION (ISOFORM ASIC1BA)</scope>
    <scope>SUBUNIT</scope>
    <scope>TISSUE SPECIFICITY</scope>
    <scope>MUTAGENESIS OF GLY-431</scope>
</reference>
<reference key="6">
    <citation type="journal article" date="2000" name="J. Biol. Chem.">
        <title>Isolation of a tarantula toxin specific for a class of proton-gated Na+ channels.</title>
        <authorList>
            <person name="Escoubas P."/>
            <person name="de Weille J.R."/>
            <person name="Lecoq A."/>
            <person name="Diochot S."/>
            <person name="Waldmann R."/>
            <person name="Champigny G."/>
            <person name="Moinier D."/>
            <person name="Menez A."/>
            <person name="Lazdunski M."/>
        </authorList>
    </citation>
    <scope>ACTIVITY REGULATION BY THE SPIDER VENOM PSALMOTOXIN-1 TOXIN</scope>
</reference>
<reference key="7">
    <citation type="journal article" date="2000" name="Neuron">
        <title>Neuropeptide FF and FMRFamide potentiate acid-evoked currents from sensory neurons and proton-gated DEG/ENaC channels.</title>
        <authorList>
            <person name="Askwith C.C."/>
            <person name="Cheng C."/>
            <person name="Ikuma M."/>
            <person name="Benson C."/>
            <person name="Price M.P."/>
            <person name="Welsh M.J."/>
        </authorList>
    </citation>
    <scope>ACTIVITY REGULATION</scope>
</reference>
<reference key="8">
    <citation type="journal article" date="2001" name="J. Neurosci.">
        <title>Nonsteroid anti-inflammatory drugs inhibit both the activity and the inflammation-induced expression of acid-sensing ion channels in nociceptors.</title>
        <authorList>
            <person name="Voilley N."/>
            <person name="de Weille J.R."/>
            <person name="Mamet J."/>
            <person name="Lazdunski M."/>
        </authorList>
    </citation>
    <scope>INDUCTION</scope>
    <scope>ACTIVITY REGULATION</scope>
</reference>
<reference key="9">
    <citation type="journal article" date="2002" name="J. Biol. Chem.">
        <title>Alternative splicing and interaction with di- and polyvalent cations control the dynamic range of acid-sensing ion channel 1 (ASIC1).</title>
        <authorList>
            <person name="Babini E."/>
            <person name="Paukert M."/>
            <person name="Geisler H.-S."/>
            <person name="Gruender S."/>
        </authorList>
    </citation>
    <scope>FUNCTION (ISOFORM ASIC1B)</scope>
    <scope>ACTIVITY REGULATION</scope>
    <scope>MUTAGENESIS OF PHE-100; VAL-103; LYS-105 AND ASN-106</scope>
</reference>
<reference key="10">
    <citation type="journal article" date="2002" name="Proc. Natl. Acad. Sci. U.S.A.">
        <title>Functional implications of the localization and activity of acid-sensitive channels in rat peripheral nervous system.</title>
        <authorList>
            <person name="Alvarez de la Rosa D."/>
            <person name="Zhang P."/>
            <person name="Shao D."/>
            <person name="White F."/>
            <person name="Canessa C.M."/>
        </authorList>
    </citation>
    <scope>TISSUE SPECIFICITY</scope>
    <scope>SUBCELLULAR LOCATION</scope>
</reference>
<reference key="11">
    <citation type="journal article" date="2003" name="J. Biol. Chem.">
        <title>The extracellular domain determines the kinetics of desensitization in acid-sensitive ion channel 1.</title>
        <authorList>
            <person name="Coric T."/>
            <person name="Zhang P."/>
            <person name="Todorovic N."/>
            <person name="Canessa C.M."/>
        </authorList>
    </citation>
    <scope>MUTAGENESIS OF SER-83; GLN-84; LEU-85 AND 128-GLN--ASP-131</scope>
</reference>
<reference key="12">
    <citation type="journal article" date="2004" name="Cell">
        <title>Neuroprotection in ischemia: blocking calcium-permeable acid-sensing ion channels.</title>
        <authorList>
            <person name="Xiong Z.-G."/>
            <person name="Zhu X.-M."/>
            <person name="Chu X.-P."/>
            <person name="Minami M."/>
            <person name="Hey J."/>
            <person name="Wei W.-L."/>
            <person name="MacDonald J.F."/>
            <person name="Wemmie J.A."/>
            <person name="Price M.P."/>
            <person name="Welsh M.J."/>
            <person name="Simon R.P."/>
        </authorList>
    </citation>
    <scope>FUNCTION</scope>
    <scope>ACTIVITY REGULATION</scope>
</reference>
<reference key="13">
    <citation type="journal article" date="2004" name="J. Gen. Physiol.">
        <title>Identification of the Ca2+ blocking site of acid-sensing ion channel (ASIC) 1: implications for channel gating.</title>
        <authorList>
            <person name="Paukert M."/>
            <person name="Babini E."/>
            <person name="Pusch M."/>
            <person name="Grunder S."/>
        </authorList>
    </citation>
    <scope>ACTIVITY REGULATION</scope>
    <scope>MUTAGENESIS OF GLU-425; ASP-432 AND GLN-436</scope>
</reference>
<reference key="14">
    <citation type="journal article" date="2012" name="Nature">
        <title>Black mamba venom peptides target acid-sensing ion channels to abolish pain.</title>
        <authorList>
            <person name="Diochot S."/>
            <person name="Baron A."/>
            <person name="Salinas M."/>
            <person name="Douguet D."/>
            <person name="Scarzello S."/>
            <person name="Dabert-Gay A.-S."/>
            <person name="Debayle D."/>
            <person name="Friend V."/>
            <person name="Alloui A."/>
            <person name="Lazdunski M."/>
            <person name="Lingueglia E."/>
        </authorList>
    </citation>
    <scope>ACTIVITY REGULATION BY SNAKE VENOM MAMBALGIN-1 AND MAMBALGIN-2</scope>
</reference>
<reference key="15">
    <citation type="journal article" date="2013" name="Toxicon">
        <title>Venom toxins in the exploration of molecular, physiological and pathophysiological functions of acid-sensing ion channels.</title>
        <authorList>
            <person name="Baron A."/>
            <person name="Diochot S."/>
            <person name="Salinas M."/>
            <person name="Deval E."/>
            <person name="Noel J."/>
            <person name="Lingueglia E."/>
        </authorList>
    </citation>
    <scope>ACTIVITY REGULATION BY MAMBALGIN-1; MAMBALGIN-2 AND MAMBALGIN-3</scope>
</reference>
<reference key="16">
    <citation type="journal article" date="2014" name="Angew. Chem. Int. Ed.">
        <title>Chemical synthesis, 3D structure, and ASIC binding site of the toxin mambalgin-2.</title>
        <authorList>
            <person name="Schroeder C.I."/>
            <person name="Rash L.D."/>
            <person name="Vila-Farres X."/>
            <person name="Rosengren K.J."/>
            <person name="Mobli M."/>
            <person name="King G.F."/>
            <person name="Alewood P.F."/>
            <person name="Craik D.J."/>
            <person name="Durek T."/>
        </authorList>
    </citation>
    <scope>MUTAGENESIS OF PHE-350</scope>
    <scope>ACTIVITY REGULATION BY MAMBALGIN-2</scope>
    <scope>SITE</scope>
</reference>
<reference key="17">
    <citation type="journal article" date="2014" name="J. Biol. Chem.">
        <title>Binding site and inhibitory mechanism of the mambalgin-2 pain-relieving peptide on acid-sensing ion channel 1a.</title>
        <authorList>
            <person name="Salinas M."/>
            <person name="Besson T."/>
            <person name="Delettre Q."/>
            <person name="Diochot S."/>
            <person name="Boulakirba S."/>
            <person name="Douguet D."/>
            <person name="Lingueglia E."/>
        </authorList>
    </citation>
    <scope>ACTIVITY REGULATION BY MAMBALGIN-2</scope>
    <scope>MUTAGENESIS OF ARG-190; ASP-259; GLN-260; 349-ASP-PHE-350; ASP-349; PHE-350; VAL-352; GLN-356 AND GLU-357</scope>
    <scope>SITE</scope>
</reference>
<reference key="18">
    <citation type="journal article" date="2015" name="Br. J. Pharmacol.">
        <title>Molecular dynamics and functional studies define a hot spot of crystal contacts essential for psalmotoxin-1 inhibition of acid-sensing ion channel 1a.</title>
        <authorList>
            <person name="Saez N.J."/>
            <person name="Deplazes E."/>
            <person name="Cristofori-Armstrong B."/>
            <person name="Chassagnon I.R."/>
            <person name="Lin X."/>
            <person name="Mobli M."/>
            <person name="Mark A.E."/>
            <person name="Rash L.D."/>
            <person name="King G.F."/>
        </authorList>
    </citation>
    <scope>ACTIVITY REGULATION BY SPIDER VENOM PSALMOTOXIN-1 TOXIN</scope>
    <scope>MUTAGENESIS OF GLU-235; TYR-316; PHE-350 AND LYS-354</scope>
    <scope>SITE</scope>
</reference>
<reference key="19">
    <citation type="journal article" date="2016" name="J. Biol. Chem.">
        <title>Mambalgin-1 pain-relieving peptide, stepwise solid-phase synthesis, crystal structure, and functional domain for acid-sensing ion channel 1a inhibition.</title>
        <authorList>
            <person name="Mourier G."/>
            <person name="Salinas M."/>
            <person name="Kessler P."/>
            <person name="Stura E.A."/>
            <person name="Leblanc M."/>
            <person name="Tepshi L."/>
            <person name="Besson T."/>
            <person name="Diochot S."/>
            <person name="Baron A."/>
            <person name="Douguet D."/>
            <person name="Lingueglia E."/>
            <person name="Servent D."/>
        </authorList>
    </citation>
    <scope>ACTIVITY REGULATION BY MAMBALGIN-1</scope>
    <scope>MUTAGENESIS OF PHE-350</scope>
    <scope>SITE</scope>
</reference>
<reference key="20">
    <citation type="journal article" date="2017" name="Neuropharmacology">
        <title>Discovery and molecular interaction studies of a highly stable, tarantula peptide modulator of acid-sensing ion channel 1.</title>
        <authorList>
            <person name="Er S.Y."/>
            <person name="Cristofori-Armstrong B."/>
            <person name="Escoubas P."/>
            <person name="Rash L.D."/>
        </authorList>
    </citation>
    <scope>ACTIVITY REGULATION BY THE SPIDER VENOM PI-THERAPHOTOXIN-HM3A</scope>
    <scope>MUTAGENESIS OF HIS-173; PHE-174; ARG-175; GLU-177; ALA-178 AND PHE-350</scope>
    <scope>SITE</scope>
</reference>
<reference key="21">
    <citation type="journal article" date="2017" name="Proc. Natl. Acad. Sci. U.S.A.">
        <title>Potent neuroprotection after stroke afforded by a double-knot spider-venom peptide that inhibits acid-sensing ion channel 1a.</title>
        <authorList>
            <person name="Chassagnon I.R."/>
            <person name="McCarthy C.A."/>
            <person name="Chin Y.K."/>
            <person name="Pineda S.S."/>
            <person name="Keramidas A."/>
            <person name="Mobli M."/>
            <person name="Pham V."/>
            <person name="De Silva T.M."/>
            <person name="Lynch J.W."/>
            <person name="Widdop R.E."/>
            <person name="Rash L.D."/>
            <person name="King G.F."/>
        </authorList>
    </citation>
    <scope>ACTIVITY REGULATION BY THE SPIDER PI-HEXATOXIN-HI1A</scope>
    <scope>MUTAGENESIS OF PHE-350</scope>
    <scope>SITE</scope>
</reference>
<organism>
    <name type="scientific">Rattus norvegicus</name>
    <name type="common">Rat</name>
    <dbReference type="NCBI Taxonomy" id="10116"/>
    <lineage>
        <taxon>Eukaryota</taxon>
        <taxon>Metazoa</taxon>
        <taxon>Chordata</taxon>
        <taxon>Craniata</taxon>
        <taxon>Vertebrata</taxon>
        <taxon>Euteleostomi</taxon>
        <taxon>Mammalia</taxon>
        <taxon>Eutheria</taxon>
        <taxon>Euarchontoglires</taxon>
        <taxon>Glires</taxon>
        <taxon>Rodentia</taxon>
        <taxon>Myomorpha</taxon>
        <taxon>Muroidea</taxon>
        <taxon>Muridae</taxon>
        <taxon>Murinae</taxon>
        <taxon>Rattus</taxon>
    </lineage>
</organism>